<gene>
    <name evidence="1" type="primary">dnaA</name>
    <name type="ordered locus">LL0001</name>
    <name type="ORF">L0274</name>
</gene>
<protein>
    <recommendedName>
        <fullName evidence="1">Chromosomal replication initiator protein DnaA</fullName>
    </recommendedName>
</protein>
<dbReference type="EMBL" id="AE005176">
    <property type="protein sequence ID" value="AAK04099.1"/>
    <property type="molecule type" value="Genomic_DNA"/>
</dbReference>
<dbReference type="PIR" id="A86625">
    <property type="entry name" value="A86625"/>
</dbReference>
<dbReference type="RefSeq" id="NP_266157.1">
    <property type="nucleotide sequence ID" value="NC_002662.1"/>
</dbReference>
<dbReference type="RefSeq" id="WP_010905022.1">
    <property type="nucleotide sequence ID" value="NC_002662.1"/>
</dbReference>
<dbReference type="SMR" id="Q9CJJ2"/>
<dbReference type="PaxDb" id="272623-L0274"/>
<dbReference type="EnsemblBacteria" id="AAK04099">
    <property type="protein sequence ID" value="AAK04099"/>
    <property type="gene ID" value="L0274"/>
</dbReference>
<dbReference type="KEGG" id="lla:L0274"/>
<dbReference type="PATRIC" id="fig|272623.7.peg.1"/>
<dbReference type="eggNOG" id="COG0593">
    <property type="taxonomic scope" value="Bacteria"/>
</dbReference>
<dbReference type="HOGENOM" id="CLU_026910_3_2_9"/>
<dbReference type="OrthoDB" id="9807019at2"/>
<dbReference type="Proteomes" id="UP000002196">
    <property type="component" value="Chromosome"/>
</dbReference>
<dbReference type="GO" id="GO:0005737">
    <property type="term" value="C:cytoplasm"/>
    <property type="evidence" value="ECO:0007669"/>
    <property type="project" value="UniProtKB-SubCell"/>
</dbReference>
<dbReference type="GO" id="GO:0005886">
    <property type="term" value="C:plasma membrane"/>
    <property type="evidence" value="ECO:0007669"/>
    <property type="project" value="TreeGrafter"/>
</dbReference>
<dbReference type="GO" id="GO:0005524">
    <property type="term" value="F:ATP binding"/>
    <property type="evidence" value="ECO:0007669"/>
    <property type="project" value="UniProtKB-UniRule"/>
</dbReference>
<dbReference type="GO" id="GO:0016887">
    <property type="term" value="F:ATP hydrolysis activity"/>
    <property type="evidence" value="ECO:0007669"/>
    <property type="project" value="InterPro"/>
</dbReference>
<dbReference type="GO" id="GO:0003688">
    <property type="term" value="F:DNA replication origin binding"/>
    <property type="evidence" value="ECO:0007669"/>
    <property type="project" value="UniProtKB-UniRule"/>
</dbReference>
<dbReference type="GO" id="GO:0008289">
    <property type="term" value="F:lipid binding"/>
    <property type="evidence" value="ECO:0007669"/>
    <property type="project" value="UniProtKB-KW"/>
</dbReference>
<dbReference type="GO" id="GO:0006270">
    <property type="term" value="P:DNA replication initiation"/>
    <property type="evidence" value="ECO:0007669"/>
    <property type="project" value="UniProtKB-UniRule"/>
</dbReference>
<dbReference type="GO" id="GO:0006275">
    <property type="term" value="P:regulation of DNA replication"/>
    <property type="evidence" value="ECO:0007669"/>
    <property type="project" value="UniProtKB-UniRule"/>
</dbReference>
<dbReference type="CDD" id="cd00009">
    <property type="entry name" value="AAA"/>
    <property type="match status" value="1"/>
</dbReference>
<dbReference type="CDD" id="cd06571">
    <property type="entry name" value="Bac_DnaA_C"/>
    <property type="match status" value="1"/>
</dbReference>
<dbReference type="FunFam" id="3.40.50.300:FF:000668">
    <property type="entry name" value="Chromosomal replication initiator protein DnaA"/>
    <property type="match status" value="1"/>
</dbReference>
<dbReference type="Gene3D" id="1.10.1750.10">
    <property type="match status" value="1"/>
</dbReference>
<dbReference type="Gene3D" id="1.10.8.60">
    <property type="match status" value="1"/>
</dbReference>
<dbReference type="Gene3D" id="3.30.300.180">
    <property type="match status" value="1"/>
</dbReference>
<dbReference type="Gene3D" id="3.40.50.300">
    <property type="entry name" value="P-loop containing nucleotide triphosphate hydrolases"/>
    <property type="match status" value="1"/>
</dbReference>
<dbReference type="HAMAP" id="MF_00377">
    <property type="entry name" value="DnaA_bact"/>
    <property type="match status" value="1"/>
</dbReference>
<dbReference type="InterPro" id="IPR003593">
    <property type="entry name" value="AAA+_ATPase"/>
</dbReference>
<dbReference type="InterPro" id="IPR001957">
    <property type="entry name" value="Chromosome_initiator_DnaA"/>
</dbReference>
<dbReference type="InterPro" id="IPR020591">
    <property type="entry name" value="Chromosome_initiator_DnaA-like"/>
</dbReference>
<dbReference type="InterPro" id="IPR018312">
    <property type="entry name" value="Chromosome_initiator_DnaA_CS"/>
</dbReference>
<dbReference type="InterPro" id="IPR013159">
    <property type="entry name" value="DnaA_C"/>
</dbReference>
<dbReference type="InterPro" id="IPR013317">
    <property type="entry name" value="DnaA_dom"/>
</dbReference>
<dbReference type="InterPro" id="IPR038454">
    <property type="entry name" value="DnaA_N_sf"/>
</dbReference>
<dbReference type="InterPro" id="IPR027417">
    <property type="entry name" value="P-loop_NTPase"/>
</dbReference>
<dbReference type="InterPro" id="IPR010921">
    <property type="entry name" value="Trp_repressor/repl_initiator"/>
</dbReference>
<dbReference type="NCBIfam" id="TIGR00362">
    <property type="entry name" value="DnaA"/>
    <property type="match status" value="1"/>
</dbReference>
<dbReference type="PANTHER" id="PTHR30050">
    <property type="entry name" value="CHROMOSOMAL REPLICATION INITIATOR PROTEIN DNAA"/>
    <property type="match status" value="1"/>
</dbReference>
<dbReference type="PANTHER" id="PTHR30050:SF2">
    <property type="entry name" value="CHROMOSOMAL REPLICATION INITIATOR PROTEIN DNAA"/>
    <property type="match status" value="1"/>
</dbReference>
<dbReference type="Pfam" id="PF00308">
    <property type="entry name" value="Bac_DnaA"/>
    <property type="match status" value="1"/>
</dbReference>
<dbReference type="Pfam" id="PF08299">
    <property type="entry name" value="Bac_DnaA_C"/>
    <property type="match status" value="1"/>
</dbReference>
<dbReference type="PRINTS" id="PR00051">
    <property type="entry name" value="DNAA"/>
</dbReference>
<dbReference type="SMART" id="SM00382">
    <property type="entry name" value="AAA"/>
    <property type="match status" value="1"/>
</dbReference>
<dbReference type="SMART" id="SM00760">
    <property type="entry name" value="Bac_DnaA_C"/>
    <property type="match status" value="1"/>
</dbReference>
<dbReference type="SUPFAM" id="SSF52540">
    <property type="entry name" value="P-loop containing nucleoside triphosphate hydrolases"/>
    <property type="match status" value="1"/>
</dbReference>
<dbReference type="SUPFAM" id="SSF48295">
    <property type="entry name" value="TrpR-like"/>
    <property type="match status" value="1"/>
</dbReference>
<dbReference type="PROSITE" id="PS01008">
    <property type="entry name" value="DNAA"/>
    <property type="match status" value="1"/>
</dbReference>
<keyword id="KW-0067">ATP-binding</keyword>
<keyword id="KW-0963">Cytoplasm</keyword>
<keyword id="KW-0235">DNA replication</keyword>
<keyword id="KW-0238">DNA-binding</keyword>
<keyword id="KW-0446">Lipid-binding</keyword>
<keyword id="KW-0547">Nucleotide-binding</keyword>
<keyword id="KW-1185">Reference proteome</keyword>
<accession>Q9CJJ2</accession>
<feature type="chain" id="PRO_0000114193" description="Chromosomal replication initiator protein DnaA">
    <location>
        <begin position="1"/>
        <end position="455"/>
    </location>
</feature>
<feature type="region of interest" description="Domain I, interacts with DnaA modulators" evidence="1">
    <location>
        <begin position="1"/>
        <end position="77"/>
    </location>
</feature>
<feature type="region of interest" description="Domain II" evidence="1">
    <location>
        <begin position="77"/>
        <end position="116"/>
    </location>
</feature>
<feature type="region of interest" description="Domain III, AAA+ region" evidence="1">
    <location>
        <begin position="117"/>
        <end position="333"/>
    </location>
</feature>
<feature type="region of interest" description="Domain IV, binds dsDNA" evidence="1">
    <location>
        <begin position="334"/>
        <end position="455"/>
    </location>
</feature>
<feature type="binding site" evidence="1">
    <location>
        <position position="161"/>
    </location>
    <ligand>
        <name>ATP</name>
        <dbReference type="ChEBI" id="CHEBI:30616"/>
    </ligand>
</feature>
<feature type="binding site" evidence="1">
    <location>
        <position position="163"/>
    </location>
    <ligand>
        <name>ATP</name>
        <dbReference type="ChEBI" id="CHEBI:30616"/>
    </ligand>
</feature>
<feature type="binding site" evidence="1">
    <location>
        <position position="164"/>
    </location>
    <ligand>
        <name>ATP</name>
        <dbReference type="ChEBI" id="CHEBI:30616"/>
    </ligand>
</feature>
<feature type="binding site" evidence="1">
    <location>
        <position position="165"/>
    </location>
    <ligand>
        <name>ATP</name>
        <dbReference type="ChEBI" id="CHEBI:30616"/>
    </ligand>
</feature>
<organism>
    <name type="scientific">Lactococcus lactis subsp. lactis (strain IL1403)</name>
    <name type="common">Streptococcus lactis</name>
    <dbReference type="NCBI Taxonomy" id="272623"/>
    <lineage>
        <taxon>Bacteria</taxon>
        <taxon>Bacillati</taxon>
        <taxon>Bacillota</taxon>
        <taxon>Bacilli</taxon>
        <taxon>Lactobacillales</taxon>
        <taxon>Streptococcaceae</taxon>
        <taxon>Lactococcus</taxon>
    </lineage>
</organism>
<evidence type="ECO:0000255" key="1">
    <source>
        <dbReference type="HAMAP-Rule" id="MF_00377"/>
    </source>
</evidence>
<proteinExistence type="inferred from homology"/>
<name>DNAA_LACLA</name>
<comment type="function">
    <text evidence="1">Plays an essential role in the initiation and regulation of chromosomal replication. ATP-DnaA binds to the origin of replication (oriC) to initiate formation of the DNA replication initiation complex once per cell cycle. Binds the DnaA box (a 9 base pair repeat at the origin) and separates the double-stranded (ds)DNA. Forms a right-handed helical filament on oriC DNA; dsDNA binds to the exterior of the filament while single-stranded (ss)DNA is stabiized in the filament's interior. The ATP-DnaA-oriC complex binds and stabilizes one strand of the AT-rich DNA unwinding element (DUE), permitting loading of DNA polymerase. After initiation quickly degrades to an ADP-DnaA complex that is not apt for DNA replication. Binds acidic phospholipids.</text>
</comment>
<comment type="subunit">
    <text evidence="1">Oligomerizes as a right-handed, spiral filament on DNA at oriC.</text>
</comment>
<comment type="subcellular location">
    <subcellularLocation>
        <location evidence="1">Cytoplasm</location>
    </subcellularLocation>
</comment>
<comment type="domain">
    <text evidence="1">Domain I is involved in oligomerization and binding regulators, domain II is flexibile and of varying length in different bacteria, domain III forms the AAA+ region, while domain IV binds dsDNA.</text>
</comment>
<comment type="similarity">
    <text evidence="1">Belongs to the DnaA family.</text>
</comment>
<reference key="1">
    <citation type="journal article" date="2001" name="Genome Res.">
        <title>The complete genome sequence of the lactic acid bacterium Lactococcus lactis ssp. lactis IL1403.</title>
        <authorList>
            <person name="Bolotin A."/>
            <person name="Wincker P."/>
            <person name="Mauger S."/>
            <person name="Jaillon O."/>
            <person name="Malarme K."/>
            <person name="Weissenbach J."/>
            <person name="Ehrlich S.D."/>
            <person name="Sorokin A."/>
        </authorList>
    </citation>
    <scope>NUCLEOTIDE SEQUENCE [LARGE SCALE GENOMIC DNA]</scope>
    <source>
        <strain>IL1403</strain>
    </source>
</reference>
<sequence length="455" mass="51461">MASLNENQKFWARVTELAQQSIGKQAYDFFIEPAQLMSVEQDTANILLDSGMKKDYWKKQSDLITTAGFEVFGRMIDYELYANDELTELELHRLNNQSSIEEQPRSTAKPASPLVSGLNEKYNFENFVQGPGNRWTLAAAIAVADKPGDTYNPLFIYGGAGLGKTHLMHAIGNQILTDNPTARIKYVSSENFVNDYVNATRKNQMENFENTYRNLDLLLLDDVQFFSDKEGTKNEFFNTFNALYDKGSQIVLTSDRIPQELNNLEDRLVSRFSWGLTTDITAPDYETRMAILLIKSESSRLEFPSETLSYIAGQIDSNVRELEGALNRVEFVARANGIAVVDIETASQALRSLKNATQQSLSNLTIKKIQDEVANYYHISFSDLVGPKRPKEIAFPRQIAMYLVRELLGTSLPAIGTAFGGRDHTTVMYAYKQISDKMKNDMDVQKDIDSIKRKF</sequence>